<gene>
    <name evidence="11" type="primary">glnA</name>
    <name type="ordered locus">STM4007</name>
</gene>
<evidence type="ECO:0000250" key="1">
    <source>
        <dbReference type="UniProtKB" id="P12425"/>
    </source>
</evidence>
<evidence type="ECO:0000250" key="2">
    <source>
        <dbReference type="UniProtKB" id="P77961"/>
    </source>
</evidence>
<evidence type="ECO:0000250" key="3">
    <source>
        <dbReference type="UniProtKB" id="P9WN39"/>
    </source>
</evidence>
<evidence type="ECO:0000250" key="4">
    <source>
        <dbReference type="UniProtKB" id="Q3V5W6"/>
    </source>
</evidence>
<evidence type="ECO:0000255" key="5">
    <source>
        <dbReference type="PROSITE-ProRule" id="PRU01330"/>
    </source>
</evidence>
<evidence type="ECO:0000255" key="6">
    <source>
        <dbReference type="PROSITE-ProRule" id="PRU01331"/>
    </source>
</evidence>
<evidence type="ECO:0000269" key="7">
    <source>
    </source>
</evidence>
<evidence type="ECO:0000269" key="8">
    <source>
    </source>
</evidence>
<evidence type="ECO:0000269" key="9">
    <source>
    </source>
</evidence>
<evidence type="ECO:0000269" key="10">
    <source>
    </source>
</evidence>
<evidence type="ECO:0000303" key="11">
    <source>
    </source>
</evidence>
<evidence type="ECO:0000305" key="12"/>
<evidence type="ECO:0000305" key="13">
    <source>
    </source>
</evidence>
<evidence type="ECO:0000305" key="14">
    <source>
    </source>
</evidence>
<evidence type="ECO:0007744" key="15">
    <source>
        <dbReference type="PDB" id="1F1H"/>
    </source>
</evidence>
<evidence type="ECO:0007744" key="16">
    <source>
        <dbReference type="PDB" id="1F52"/>
    </source>
</evidence>
<evidence type="ECO:0007744" key="17">
    <source>
        <dbReference type="PDB" id="1FPY"/>
    </source>
</evidence>
<evidence type="ECO:0007744" key="18">
    <source>
        <dbReference type="PDB" id="1LGR"/>
    </source>
</evidence>
<evidence type="ECO:0007744" key="19">
    <source>
        <dbReference type="PDB" id="2GLS"/>
    </source>
</evidence>
<evidence type="ECO:0007744" key="20">
    <source>
        <dbReference type="PDB" id="2LGS"/>
    </source>
</evidence>
<evidence type="ECO:0007829" key="21">
    <source>
        <dbReference type="PDB" id="1F1H"/>
    </source>
</evidence>
<evidence type="ECO:0007829" key="22">
    <source>
        <dbReference type="PDB" id="1F52"/>
    </source>
</evidence>
<evidence type="ECO:0007829" key="23">
    <source>
        <dbReference type="PDB" id="1FPY"/>
    </source>
</evidence>
<evidence type="ECO:0007829" key="24">
    <source>
        <dbReference type="PDB" id="1LGR"/>
    </source>
</evidence>
<evidence type="ECO:0007829" key="25">
    <source>
        <dbReference type="PDB" id="2GLS"/>
    </source>
</evidence>
<dbReference type="EC" id="6.3.1.2" evidence="14"/>
<dbReference type="EMBL" id="M14536">
    <property type="protein sequence ID" value="AAA27134.1"/>
    <property type="molecule type" value="Genomic_DNA"/>
</dbReference>
<dbReference type="EMBL" id="AE006468">
    <property type="protein sequence ID" value="AAL22846.1"/>
    <property type="molecule type" value="Genomic_DNA"/>
</dbReference>
<dbReference type="EMBL" id="X85104">
    <property type="protein sequence ID" value="CAA59423.1"/>
    <property type="molecule type" value="Genomic_DNA"/>
</dbReference>
<dbReference type="PIR" id="A25818">
    <property type="entry name" value="AJEBQT"/>
</dbReference>
<dbReference type="RefSeq" id="NP_462887.1">
    <property type="nucleotide sequence ID" value="NC_003197.2"/>
</dbReference>
<dbReference type="RefSeq" id="WP_001271699.1">
    <property type="nucleotide sequence ID" value="NC_003197.2"/>
</dbReference>
<dbReference type="PDB" id="1F1H">
    <property type="method" value="X-ray"/>
    <property type="resolution" value="2.67 A"/>
    <property type="chains" value="A/B/C/D/E/F/G/H/I/J/K/L=2-469"/>
</dbReference>
<dbReference type="PDB" id="1F52">
    <property type="method" value="X-ray"/>
    <property type="resolution" value="2.49 A"/>
    <property type="chains" value="A/B/C/D/E/F/G/H/I/J/K/L=2-469"/>
</dbReference>
<dbReference type="PDB" id="1FPY">
    <property type="method" value="X-ray"/>
    <property type="resolution" value="2.89 A"/>
    <property type="chains" value="A/B/C/D/E/F/G/H/I/J/K/L=2-469"/>
</dbReference>
<dbReference type="PDB" id="1LGR">
    <property type="method" value="X-ray"/>
    <property type="resolution" value="2.79 A"/>
    <property type="chains" value="A/B/C/D/E/F/G/H/I/J/K/L=2-469"/>
</dbReference>
<dbReference type="PDB" id="2GLS">
    <property type="method" value="X-ray"/>
    <property type="resolution" value="3.50 A"/>
    <property type="chains" value="A/B/C/D/E/F/G/H/I/J/K/L=1-469"/>
</dbReference>
<dbReference type="PDB" id="2LGS">
    <property type="method" value="X-ray"/>
    <property type="resolution" value="2.80 A"/>
    <property type="chains" value="A/B/C/D/E/F/G/H/I/J/K/L=2-469"/>
</dbReference>
<dbReference type="PDBsum" id="1F1H"/>
<dbReference type="PDBsum" id="1F52"/>
<dbReference type="PDBsum" id="1FPY"/>
<dbReference type="PDBsum" id="1LGR"/>
<dbReference type="PDBsum" id="2GLS"/>
<dbReference type="PDBsum" id="2LGS"/>
<dbReference type="SMR" id="P0A1P6"/>
<dbReference type="DIP" id="DIP-61253N"/>
<dbReference type="STRING" id="99287.STM4007"/>
<dbReference type="BindingDB" id="P0A1P6"/>
<dbReference type="ChEMBL" id="CHEMBL5089"/>
<dbReference type="DrugBank" id="DB02663">
    <property type="generic name" value="2-Amino-4-(Hydroxymethyl-Phosphinyl)Butanoic Acid"/>
</dbReference>
<dbReference type="PaxDb" id="99287-STM4007"/>
<dbReference type="GeneID" id="1255533"/>
<dbReference type="KEGG" id="stm:STM4007"/>
<dbReference type="PATRIC" id="fig|99287.12.peg.4223"/>
<dbReference type="HOGENOM" id="CLU_017290_1_2_6"/>
<dbReference type="OMA" id="PHPHEFE"/>
<dbReference type="PhylomeDB" id="P0A1P6"/>
<dbReference type="BioCyc" id="SENT99287:STM4007-MONOMER"/>
<dbReference type="BRENDA" id="6.3.1.2">
    <property type="organism ID" value="5542"/>
</dbReference>
<dbReference type="EvolutionaryTrace" id="P0A1P6"/>
<dbReference type="PHI-base" id="PHI:7742"/>
<dbReference type="Proteomes" id="UP000001014">
    <property type="component" value="Chromosome"/>
</dbReference>
<dbReference type="GO" id="GO:0005737">
    <property type="term" value="C:cytoplasm"/>
    <property type="evidence" value="ECO:0000318"/>
    <property type="project" value="GO_Central"/>
</dbReference>
<dbReference type="GO" id="GO:0016020">
    <property type="term" value="C:membrane"/>
    <property type="evidence" value="ECO:0000318"/>
    <property type="project" value="GO_Central"/>
</dbReference>
<dbReference type="GO" id="GO:0005524">
    <property type="term" value="F:ATP binding"/>
    <property type="evidence" value="ECO:0000314"/>
    <property type="project" value="UniProtKB"/>
</dbReference>
<dbReference type="GO" id="GO:0004356">
    <property type="term" value="F:glutamine synthetase activity"/>
    <property type="evidence" value="ECO:0000314"/>
    <property type="project" value="UniProtKB"/>
</dbReference>
<dbReference type="GO" id="GO:0030145">
    <property type="term" value="F:manganese ion binding"/>
    <property type="evidence" value="ECO:0000314"/>
    <property type="project" value="UniProtKB"/>
</dbReference>
<dbReference type="GO" id="GO:0006542">
    <property type="term" value="P:glutamine biosynthetic process"/>
    <property type="evidence" value="ECO:0000314"/>
    <property type="project" value="UniProtKB"/>
</dbReference>
<dbReference type="GO" id="GO:0019740">
    <property type="term" value="P:nitrogen utilization"/>
    <property type="evidence" value="ECO:0000314"/>
    <property type="project" value="UniProtKB"/>
</dbReference>
<dbReference type="GO" id="GO:0051260">
    <property type="term" value="P:protein homooligomerization"/>
    <property type="evidence" value="ECO:0000314"/>
    <property type="project" value="UniProtKB"/>
</dbReference>
<dbReference type="FunFam" id="3.10.20.70:FF:000001">
    <property type="entry name" value="Glutamine synthetase"/>
    <property type="match status" value="1"/>
</dbReference>
<dbReference type="FunFam" id="3.30.590.10:FF:000001">
    <property type="entry name" value="Glutamine synthetase"/>
    <property type="match status" value="1"/>
</dbReference>
<dbReference type="Gene3D" id="3.10.20.70">
    <property type="entry name" value="Glutamine synthetase, N-terminal domain"/>
    <property type="match status" value="1"/>
</dbReference>
<dbReference type="Gene3D" id="3.30.590.10">
    <property type="entry name" value="Glutamine synthetase/guanido kinase, catalytic domain"/>
    <property type="match status" value="1"/>
</dbReference>
<dbReference type="InterPro" id="IPR008147">
    <property type="entry name" value="Gln_synt_N"/>
</dbReference>
<dbReference type="InterPro" id="IPR036651">
    <property type="entry name" value="Gln_synt_N_sf"/>
</dbReference>
<dbReference type="InterPro" id="IPR014746">
    <property type="entry name" value="Gln_synth/guanido_kin_cat_dom"/>
</dbReference>
<dbReference type="InterPro" id="IPR008146">
    <property type="entry name" value="Gln_synth_cat_dom"/>
</dbReference>
<dbReference type="InterPro" id="IPR027303">
    <property type="entry name" value="Gln_synth_gly_rich_site"/>
</dbReference>
<dbReference type="InterPro" id="IPR004809">
    <property type="entry name" value="Gln_synth_I"/>
</dbReference>
<dbReference type="InterPro" id="IPR001637">
    <property type="entry name" value="Gln_synth_I_adenylation_site"/>
</dbReference>
<dbReference type="InterPro" id="IPR027302">
    <property type="entry name" value="Gln_synth_N_conserv_site"/>
</dbReference>
<dbReference type="NCBIfam" id="TIGR00653">
    <property type="entry name" value="GlnA"/>
    <property type="match status" value="1"/>
</dbReference>
<dbReference type="NCBIfam" id="NF007006">
    <property type="entry name" value="PRK09469.1"/>
    <property type="match status" value="1"/>
</dbReference>
<dbReference type="PANTHER" id="PTHR43407">
    <property type="entry name" value="GLUTAMINE SYNTHETASE"/>
    <property type="match status" value="1"/>
</dbReference>
<dbReference type="PANTHER" id="PTHR43407:SF2">
    <property type="entry name" value="GLUTAMINE SYNTHETASE"/>
    <property type="match status" value="1"/>
</dbReference>
<dbReference type="Pfam" id="PF00120">
    <property type="entry name" value="Gln-synt_C"/>
    <property type="match status" value="1"/>
</dbReference>
<dbReference type="Pfam" id="PF03951">
    <property type="entry name" value="Gln-synt_N"/>
    <property type="match status" value="1"/>
</dbReference>
<dbReference type="SMART" id="SM01230">
    <property type="entry name" value="Gln-synt_C"/>
    <property type="match status" value="1"/>
</dbReference>
<dbReference type="SUPFAM" id="SSF54368">
    <property type="entry name" value="Glutamine synthetase, N-terminal domain"/>
    <property type="match status" value="1"/>
</dbReference>
<dbReference type="SUPFAM" id="SSF55931">
    <property type="entry name" value="Glutamine synthetase/guanido kinase"/>
    <property type="match status" value="1"/>
</dbReference>
<dbReference type="PROSITE" id="PS00180">
    <property type="entry name" value="GLNA_1"/>
    <property type="match status" value="1"/>
</dbReference>
<dbReference type="PROSITE" id="PS00182">
    <property type="entry name" value="GLNA_ADENYLATION"/>
    <property type="match status" value="1"/>
</dbReference>
<dbReference type="PROSITE" id="PS00181">
    <property type="entry name" value="GLNA_ATP"/>
    <property type="match status" value="1"/>
</dbReference>
<dbReference type="PROSITE" id="PS51986">
    <property type="entry name" value="GS_BETA_GRASP"/>
    <property type="match status" value="1"/>
</dbReference>
<dbReference type="PROSITE" id="PS51987">
    <property type="entry name" value="GS_CATALYTIC"/>
    <property type="match status" value="1"/>
</dbReference>
<feature type="chain" id="PRO_0000153253" description="Glutamine synthetase">
    <location>
        <begin position="1"/>
        <end position="469"/>
    </location>
</feature>
<feature type="domain" description="GS beta-grasp" evidence="5">
    <location>
        <begin position="13"/>
        <end position="97"/>
    </location>
</feature>
<feature type="domain" description="GS catalytic" evidence="6">
    <location>
        <begin position="105"/>
        <end position="469"/>
    </location>
</feature>
<feature type="binding site" evidence="7 8 10 15 16 17 19 20">
    <location>
        <position position="130"/>
    </location>
    <ligand>
        <name>Mn(2+)</name>
        <dbReference type="ChEBI" id="CHEBI:29035"/>
        <label>1</label>
    </ligand>
</feature>
<feature type="binding site" evidence="7 9 10 15 16 17 18 20">
    <location>
        <position position="132"/>
    </location>
    <ligand>
        <name>Mn(2+)</name>
        <dbReference type="ChEBI" id="CHEBI:29035"/>
        <label>2</label>
    </ligand>
</feature>
<feature type="binding site" evidence="9 18">
    <location>
        <position position="208"/>
    </location>
    <ligand>
        <name>ATP</name>
        <dbReference type="ChEBI" id="CHEBI:30616"/>
    </ligand>
</feature>
<feature type="binding site" evidence="7 9 10 15 16 17 18 20">
    <location>
        <position position="213"/>
    </location>
    <ligand>
        <name>Mn(2+)</name>
        <dbReference type="ChEBI" id="CHEBI:29035"/>
        <label>2</label>
    </ligand>
</feature>
<feature type="binding site" evidence="7 9 10 15 16 17 18 20">
    <location>
        <position position="221"/>
    </location>
    <ligand>
        <name>Mn(2+)</name>
        <dbReference type="ChEBI" id="CHEBI:29035"/>
        <label>2</label>
    </ligand>
</feature>
<feature type="binding site" evidence="9 10 13 15 17 18 20">
    <location>
        <begin position="265"/>
        <end position="266"/>
    </location>
    <ligand>
        <name>L-glutamate</name>
        <dbReference type="ChEBI" id="CHEBI:29985"/>
    </ligand>
</feature>
<feature type="binding site" evidence="1">
    <location>
        <position position="266"/>
    </location>
    <ligand>
        <name>L-glutamate</name>
        <dbReference type="ChEBI" id="CHEBI:29985"/>
    </ligand>
</feature>
<feature type="binding site" evidence="7 8 10 15 16 17 19 20">
    <location>
        <position position="270"/>
    </location>
    <ligand>
        <name>Mn(2+)</name>
        <dbReference type="ChEBI" id="CHEBI:29035"/>
        <label>1</label>
    </ligand>
</feature>
<feature type="binding site" evidence="7 15 16 17">
    <location>
        <begin position="272"/>
        <end position="274"/>
    </location>
    <ligand>
        <name>ATP</name>
        <dbReference type="ChEBI" id="CHEBI:30616"/>
    </ligand>
</feature>
<feature type="binding site" evidence="2">
    <location>
        <position position="274"/>
    </location>
    <ligand>
        <name>ATP</name>
        <dbReference type="ChEBI" id="CHEBI:30616"/>
    </ligand>
</feature>
<feature type="binding site" evidence="10 13 17 20">
    <location>
        <position position="322"/>
    </location>
    <ligand>
        <name>L-glutamate</name>
        <dbReference type="ChEBI" id="CHEBI:29985"/>
    </ligand>
</feature>
<feature type="binding site" evidence="13 17">
    <location>
        <position position="328"/>
    </location>
    <ligand>
        <name>L-glutamate</name>
        <dbReference type="ChEBI" id="CHEBI:29985"/>
    </ligand>
</feature>
<feature type="binding site" evidence="3">
    <location>
        <position position="340"/>
    </location>
    <ligand>
        <name>ATP</name>
        <dbReference type="ChEBI" id="CHEBI:30616"/>
    </ligand>
</feature>
<feature type="binding site" evidence="3">
    <location>
        <position position="340"/>
    </location>
    <ligand>
        <name>L-glutamate</name>
        <dbReference type="ChEBI" id="CHEBI:29985"/>
    </ligand>
</feature>
<feature type="binding site" evidence="3">
    <location>
        <position position="345"/>
    </location>
    <ligand>
        <name>ATP</name>
        <dbReference type="ChEBI" id="CHEBI:30616"/>
    </ligand>
</feature>
<feature type="binding site" evidence="2">
    <location>
        <position position="353"/>
    </location>
    <ligand>
        <name>ATP</name>
        <dbReference type="ChEBI" id="CHEBI:30616"/>
    </ligand>
</feature>
<feature type="binding site" evidence="7 8 9 10 15 16 17 18 19 20">
    <location>
        <position position="358"/>
    </location>
    <ligand>
        <name>Mn(2+)</name>
        <dbReference type="ChEBI" id="CHEBI:29035"/>
        <label>1</label>
    </ligand>
</feature>
<feature type="binding site" evidence="10 20">
    <location>
        <position position="360"/>
    </location>
    <ligand>
        <name>L-glutamate</name>
        <dbReference type="ChEBI" id="CHEBI:29985"/>
    </ligand>
</feature>
<feature type="modified residue" description="O-AMP-tyrosine" evidence="3">
    <location>
        <position position="398"/>
    </location>
</feature>
<feature type="sequence conflict" description="In Ref. 3; CAA59423." evidence="12" ref="3">
    <original>A</original>
    <variation>R</variation>
    <location>
        <position position="223"/>
    </location>
</feature>
<feature type="sequence conflict" description="In Ref. 1; AAA27134 and 3; CAA59423." evidence="12" ref="1 3">
    <original>A</original>
    <variation>P</variation>
    <location>
        <position position="392"/>
    </location>
</feature>
<feature type="sequence conflict" description="In Ref. 1; AAA27134." evidence="12" ref="1">
    <original>R</original>
    <variation>P</variation>
    <location>
        <position position="448"/>
    </location>
</feature>
<feature type="helix" evidence="22">
    <location>
        <begin position="3"/>
        <end position="12"/>
    </location>
</feature>
<feature type="strand" evidence="22">
    <location>
        <begin position="17"/>
        <end position="23"/>
    </location>
</feature>
<feature type="strand" evidence="23">
    <location>
        <begin position="25"/>
        <end position="27"/>
    </location>
</feature>
<feature type="strand" evidence="22">
    <location>
        <begin position="29"/>
        <end position="35"/>
    </location>
</feature>
<feature type="helix" evidence="22">
    <location>
        <begin position="36"/>
        <end position="38"/>
    </location>
</feature>
<feature type="helix" evidence="22">
    <location>
        <begin position="41"/>
        <end position="46"/>
    </location>
</feature>
<feature type="strand" evidence="22">
    <location>
        <begin position="48"/>
        <end position="51"/>
    </location>
</feature>
<feature type="helix" evidence="22">
    <location>
        <begin position="52"/>
        <end position="54"/>
    </location>
</feature>
<feature type="strand" evidence="21">
    <location>
        <begin position="55"/>
        <end position="57"/>
    </location>
</feature>
<feature type="turn" evidence="23">
    <location>
        <begin position="61"/>
        <end position="63"/>
    </location>
</feature>
<feature type="strand" evidence="22">
    <location>
        <begin position="65"/>
        <end position="70"/>
    </location>
</feature>
<feature type="helix" evidence="22">
    <location>
        <begin position="72"/>
        <end position="74"/>
    </location>
</feature>
<feature type="strand" evidence="25">
    <location>
        <begin position="77"/>
        <end position="81"/>
    </location>
</feature>
<feature type="strand" evidence="22">
    <location>
        <begin position="85"/>
        <end position="93"/>
    </location>
</feature>
<feature type="turn" evidence="22">
    <location>
        <begin position="95"/>
        <end position="97"/>
    </location>
</feature>
<feature type="helix" evidence="22">
    <location>
        <begin position="105"/>
        <end position="118"/>
    </location>
</feature>
<feature type="strand" evidence="22">
    <location>
        <begin position="123"/>
        <end position="144"/>
    </location>
</feature>
<feature type="strand" evidence="22">
    <location>
        <begin position="147"/>
        <end position="153"/>
    </location>
</feature>
<feature type="helix" evidence="22">
    <location>
        <begin position="158"/>
        <end position="162"/>
    </location>
</feature>
<feature type="turn" evidence="23">
    <location>
        <begin position="176"/>
        <end position="178"/>
    </location>
</feature>
<feature type="strand" evidence="22">
    <location>
        <begin position="180"/>
        <end position="182"/>
    </location>
</feature>
<feature type="turn" evidence="24">
    <location>
        <begin position="184"/>
        <end position="186"/>
    </location>
</feature>
<feature type="helix" evidence="22">
    <location>
        <begin position="190"/>
        <end position="202"/>
    </location>
</feature>
<feature type="strand" evidence="22">
    <location>
        <begin position="207"/>
        <end position="212"/>
    </location>
</feature>
<feature type="turn" evidence="22">
    <location>
        <begin position="216"/>
        <end position="218"/>
    </location>
</feature>
<feature type="strand" evidence="22">
    <location>
        <begin position="219"/>
        <end position="224"/>
    </location>
</feature>
<feature type="helix" evidence="22">
    <location>
        <begin position="229"/>
        <end position="249"/>
    </location>
</feature>
<feature type="strand" evidence="22">
    <location>
        <begin position="253"/>
        <end position="255"/>
    </location>
</feature>
<feature type="strand" evidence="23">
    <location>
        <begin position="260"/>
        <end position="264"/>
    </location>
</feature>
<feature type="strand" evidence="22">
    <location>
        <begin position="269"/>
        <end position="277"/>
    </location>
</feature>
<feature type="strand" evidence="21">
    <location>
        <begin position="284"/>
        <end position="287"/>
    </location>
</feature>
<feature type="helix" evidence="22">
    <location>
        <begin position="288"/>
        <end position="290"/>
    </location>
</feature>
<feature type="helix" evidence="22">
    <location>
        <begin position="293"/>
        <end position="304"/>
    </location>
</feature>
<feature type="helix" evidence="22">
    <location>
        <begin position="306"/>
        <end position="313"/>
    </location>
</feature>
<feature type="helix" evidence="22">
    <location>
        <begin position="317"/>
        <end position="321"/>
    </location>
</feature>
<feature type="strand" evidence="22">
    <location>
        <begin position="323"/>
        <end position="325"/>
    </location>
</feature>
<feature type="strand" evidence="21">
    <location>
        <begin position="327"/>
        <end position="329"/>
    </location>
</feature>
<feature type="strand" evidence="22">
    <location>
        <begin position="332"/>
        <end position="338"/>
    </location>
</feature>
<feature type="strand" evidence="22">
    <location>
        <begin position="342"/>
        <end position="345"/>
    </location>
</feature>
<feature type="helix" evidence="22">
    <location>
        <begin position="352"/>
        <end position="354"/>
    </location>
</feature>
<feature type="strand" evidence="22">
    <location>
        <begin position="357"/>
        <end position="359"/>
    </location>
</feature>
<feature type="helix" evidence="22">
    <location>
        <begin position="368"/>
        <end position="384"/>
    </location>
</feature>
<feature type="strand" evidence="22">
    <location>
        <begin position="398"/>
        <end position="400"/>
    </location>
</feature>
<feature type="turn" evidence="25">
    <location>
        <begin position="403"/>
        <end position="407"/>
    </location>
</feature>
<feature type="helix" evidence="22">
    <location>
        <begin position="415"/>
        <end position="424"/>
    </location>
</feature>
<feature type="helix" evidence="22">
    <location>
        <begin position="427"/>
        <end position="430"/>
    </location>
</feature>
<feature type="helix" evidence="22">
    <location>
        <begin position="431"/>
        <end position="433"/>
    </location>
</feature>
<feature type="helix" evidence="22">
    <location>
        <begin position="437"/>
        <end position="456"/>
    </location>
</feature>
<feature type="helix" evidence="22">
    <location>
        <begin position="460"/>
        <end position="466"/>
    </location>
</feature>
<organism>
    <name type="scientific">Salmonella typhimurium (strain LT2 / SGSC1412 / ATCC 700720)</name>
    <dbReference type="NCBI Taxonomy" id="99287"/>
    <lineage>
        <taxon>Bacteria</taxon>
        <taxon>Pseudomonadati</taxon>
        <taxon>Pseudomonadota</taxon>
        <taxon>Gammaproteobacteria</taxon>
        <taxon>Enterobacterales</taxon>
        <taxon>Enterobacteriaceae</taxon>
        <taxon>Salmonella</taxon>
    </lineage>
</organism>
<accession>P0A1P6</accession>
<accession>P06201</accession>
<accession>Q60007</accession>
<protein>
    <recommendedName>
        <fullName evidence="11">Glutamine synthetase</fullName>
        <shortName evidence="11">GS</shortName>
        <ecNumber evidence="14">6.3.1.2</ecNumber>
    </recommendedName>
    <alternativeName>
        <fullName evidence="12">Glutamate--ammonia ligase</fullName>
    </alternativeName>
    <alternativeName>
        <fullName evidence="12">Glutamine synthetase I beta</fullName>
        <shortName evidence="12">GSI beta</shortName>
    </alternativeName>
</protein>
<proteinExistence type="evidence at protein level"/>
<name>GLN1B_SALTY</name>
<reference key="1">
    <citation type="journal article" date="1986" name="Gene">
        <title>Sequence of glutamine synthetase from Salmonella typhimurium and implications for the protein structure.</title>
        <authorList>
            <person name="Janson C.A."/>
            <person name="Kayne P.S."/>
            <person name="Almassy R.J."/>
            <person name="Grunstein M."/>
            <person name="Eisenberg D."/>
        </authorList>
    </citation>
    <scope>NUCLEOTIDE SEQUENCE [GENOMIC DNA]</scope>
</reference>
<reference key="2">
    <citation type="journal article" date="2001" name="Nature">
        <title>Complete genome sequence of Salmonella enterica serovar Typhimurium LT2.</title>
        <authorList>
            <person name="McClelland M."/>
            <person name="Sanderson K.E."/>
            <person name="Spieth J."/>
            <person name="Clifton S.W."/>
            <person name="Latreille P."/>
            <person name="Courtney L."/>
            <person name="Porwollik S."/>
            <person name="Ali J."/>
            <person name="Dante M."/>
            <person name="Du F."/>
            <person name="Hou S."/>
            <person name="Layman D."/>
            <person name="Leonard S."/>
            <person name="Nguyen C."/>
            <person name="Scott K."/>
            <person name="Holmes A."/>
            <person name="Grewal N."/>
            <person name="Mulvaney E."/>
            <person name="Ryan E."/>
            <person name="Sun H."/>
            <person name="Florea L."/>
            <person name="Miller W."/>
            <person name="Stoneking T."/>
            <person name="Nhan M."/>
            <person name="Waterston R."/>
            <person name="Wilson R.K."/>
        </authorList>
    </citation>
    <scope>NUCLEOTIDE SEQUENCE [LARGE SCALE GENOMIC DNA]</scope>
    <source>
        <strain>LT2 / SGSC1412 / ATCC 700720</strain>
    </source>
</reference>
<reference key="3">
    <citation type="submission" date="1995-03" db="EMBL/GenBank/DDBJ databases">
        <authorList>
            <person name="Kustu S.G."/>
        </authorList>
    </citation>
    <scope>NUCLEOTIDE SEQUENCE [GENOMIC DNA] OF 133-469</scope>
    <source>
        <strain>LT2</strain>
    </source>
</reference>
<reference key="4">
    <citation type="journal article" date="1989" name="J. Biol. Chem.">
        <title>Refined atomic model of glutamine synthetase at 3.5 A resolution.</title>
        <authorList>
            <person name="Yamashita M.M."/>
            <person name="Almassy R.J."/>
            <person name="Janson C.A."/>
            <person name="Cascio D."/>
            <person name="Eisenberg D."/>
        </authorList>
    </citation>
    <scope>X-RAY CRYSTALLOGRAPHY (3.50 ANGSTROMS) IN COMPLEX WITH MANGANESE ION</scope>
    <scope>COFACTOR</scope>
    <scope>SUBUNIT</scope>
</reference>
<reference key="5">
    <citation type="journal article" date="1993" name="Proc. Natl. Acad. Sci. U.S.A.">
        <title>Feedback inhibition of fully unadenylylated glutamine synthetase from Salmonella typhimurium by glycine, alanine, and serine.</title>
        <authorList>
            <person name="Liaw S.H."/>
            <person name="Pan C."/>
            <person name="Eisenberg D."/>
        </authorList>
    </citation>
    <scope>X-RAY CRYSTALLOGRAPHY (2.80 ANGSTROMS) OF 2-469 IN COMPLEX WITH L-GLUTAMATE AND 2 MANGANESE IONS</scope>
    <scope>ACTIVITY REGULATION</scope>
    <scope>COFACTOR</scope>
    <scope>SUBUNIT</scope>
</reference>
<reference key="6">
    <citation type="journal article" date="1994" name="Biochemistry">
        <title>Interactions of nucleotides with fully unadenylylated glutamine synthetase from Salmonella typhimurium.</title>
        <authorList>
            <person name="Liaw S.H."/>
            <person name="Jun G."/>
            <person name="Eisenberg D."/>
        </authorList>
    </citation>
    <scope>X-RAY CRYSTALLOGRAPHY (2.79 ANGSTROMS) OF 2-469 IN COMPLEX WITH AMP AND 2 MANGANESE IONS</scope>
    <scope>FUNCTION</scope>
    <scope>CATALYTIC ACTIVITY</scope>
    <scope>ACTIVITY REGULATION</scope>
    <scope>BIOPHYSICOCHEMICAL PROPERTIES</scope>
    <scope>COFACTOR</scope>
    <scope>SUBUNIT</scope>
</reference>
<reference key="7">
    <citation type="journal article" date="2001" name="Biochemistry">
        <title>The crystal structure of phosphinothricin in the active site of glutamine synthetase illuminates the mechanism of enzymatic inhibition.</title>
        <authorList>
            <person name="Gill H.S."/>
            <person name="Eisenberg D."/>
        </authorList>
    </citation>
    <scope>X-RAY CRYSTALLOGRAPHY (2.49 ANGSTROMS) OF 2-469 IN COMPLEX WITH ADP; SUBSTRATE ANALOG AND 2 MANGANESE IONS</scope>
    <scope>ACTIVITY REGULATION</scope>
    <scope>COFACTOR</scope>
    <scope>SUBUNIT</scope>
</reference>
<comment type="function">
    <text evidence="9">Catalyzes the ATP-dependent biosynthesis of glutamine from glutamate and ammonia.</text>
</comment>
<comment type="catalytic activity">
    <reaction evidence="14">
        <text>L-glutamate + NH4(+) + ATP = L-glutamine + ADP + phosphate + H(+)</text>
        <dbReference type="Rhea" id="RHEA:16169"/>
        <dbReference type="ChEBI" id="CHEBI:15378"/>
        <dbReference type="ChEBI" id="CHEBI:28938"/>
        <dbReference type="ChEBI" id="CHEBI:29985"/>
        <dbReference type="ChEBI" id="CHEBI:30616"/>
        <dbReference type="ChEBI" id="CHEBI:43474"/>
        <dbReference type="ChEBI" id="CHEBI:58359"/>
        <dbReference type="ChEBI" id="CHEBI:456216"/>
        <dbReference type="EC" id="6.3.1.2"/>
    </reaction>
</comment>
<comment type="cofactor">
    <cofactor evidence="7 8 9 10">
        <name>Mn(2+)</name>
        <dbReference type="ChEBI" id="CHEBI:29035"/>
    </cofactor>
    <text evidence="7 8 9 10">Binds 2 Mn(2+) ions per subunit.</text>
</comment>
<comment type="activity regulation">
    <text evidence="4">When cellular nitrogen levels are high, the C-terminal adenylyl transferase (AT) of GlnE inhibits GlnA by covalent transfer of an adenylyl group from ATP to Tyr-398. Conversely, when nitrogen levels are low, the N-terminal adenylyl removase (AR) of GlnE activates GlnA by removing the adenylyl group by phosphorolysis. The fully adenylated enzyme complex is inactive.</text>
</comment>
<comment type="biophysicochemical properties">
    <kinetics>
        <KM evidence="9">0.58 mM for ATP</KM>
    </kinetics>
</comment>
<comment type="subunit">
    <text evidence="7 8 9 10">Oligomer of 12 subunits arranged in the form of two hexameric ring.</text>
</comment>
<comment type="subcellular location">
    <subcellularLocation>
        <location evidence="3">Cytoplasm</location>
    </subcellularLocation>
</comment>
<comment type="similarity">
    <text evidence="12">Belongs to the glutamine synthetase family.</text>
</comment>
<keyword id="KW-0002">3D-structure</keyword>
<keyword id="KW-0067">ATP-binding</keyword>
<keyword id="KW-0963">Cytoplasm</keyword>
<keyword id="KW-0436">Ligase</keyword>
<keyword id="KW-0460">Magnesium</keyword>
<keyword id="KW-0464">Manganese</keyword>
<keyword id="KW-0479">Metal-binding</keyword>
<keyword id="KW-0547">Nucleotide-binding</keyword>
<keyword id="KW-0597">Phosphoprotein</keyword>
<keyword id="KW-1185">Reference proteome</keyword>
<sequence length="469" mass="51786">MSAEHVLTMLNEHEVKFVDLRFTDTKGKEQHVTIPAHQVNAEFFEEGKMFDGSSIGGWKGINESDMVLMPDASTAVIDPFFADSTLIIRCDILEPGTLQGYDRDPRSIAKRAEDYLRATGIADTVLFGPEPEFFLFDDIRFGASISGSHVAIDDIEGAWNSSTKYEGGNKGHRPGVKGGYFPVPPVDSAQDIRSEMCLVMEQMGLVVEAHHHEVATAGQNEVATRFNTMTKKADEIQIYKYVVHNVAHRFGKTATFMPKPMFGDNGSGMHCHMSLAKNGTNLFSGDKYAGLSEQALYYIGGVIKHAKAINALANPTTNSYKRLVPGYEAPVMLAYSARNRSASIRIPVVASPKARRIEVRFPDPAANPYLCFAALLMAGLDGIKNKIHPGEAMDKNLYDLPPEEAKEIPQVAGSLEEALNALDLDREFLKAGGVFTDEAIDAYIALRREEDDRVRMTPHPVEFELYYSV</sequence>